<reference key="1">
    <citation type="journal article" date="2003" name="Proc. Natl. Acad. Sci. U.S.A.">
        <title>Reductive genome evolution in Buchnera aphidicola.</title>
        <authorList>
            <person name="van Ham R.C.H.J."/>
            <person name="Kamerbeek J."/>
            <person name="Palacios C."/>
            <person name="Rausell C."/>
            <person name="Abascal F."/>
            <person name="Bastolla U."/>
            <person name="Fernandez J.M."/>
            <person name="Jimenez L."/>
            <person name="Postigo M."/>
            <person name="Silva F.J."/>
            <person name="Tamames J."/>
            <person name="Viguera E."/>
            <person name="Latorre A."/>
            <person name="Valencia A."/>
            <person name="Moran F."/>
            <person name="Moya A."/>
        </authorList>
    </citation>
    <scope>NUCLEOTIDE SEQUENCE [LARGE SCALE GENOMIC DNA]</scope>
    <source>
        <strain>Bp</strain>
    </source>
</reference>
<comment type="function">
    <text evidence="1">Involved in mRNA degradation. Hydrolyzes single-stranded polyribonucleotides processively in the 3' to 5' direction (By similarity).</text>
</comment>
<comment type="catalytic activity">
    <reaction>
        <text>Exonucleolytic cleavage in the 3'- to 5'-direction to yield nucleoside 5'-phosphates.</text>
        <dbReference type="EC" id="3.1.13.1"/>
    </reaction>
</comment>
<comment type="subcellular location">
    <subcellularLocation>
        <location evidence="1">Cytoplasm</location>
    </subcellularLocation>
</comment>
<comment type="similarity">
    <text evidence="3">Belongs to the RNR ribonuclease family. RNase II subfamily.</text>
</comment>
<evidence type="ECO:0000250" key="1"/>
<evidence type="ECO:0000255" key="2"/>
<evidence type="ECO:0000305" key="3"/>
<gene>
    <name type="primary">rnb</name>
    <name type="ordered locus">bbp_247</name>
</gene>
<keyword id="KW-0963">Cytoplasm</keyword>
<keyword id="KW-0269">Exonuclease</keyword>
<keyword id="KW-0378">Hydrolase</keyword>
<keyword id="KW-0540">Nuclease</keyword>
<keyword id="KW-1185">Reference proteome</keyword>
<keyword id="KW-0694">RNA-binding</keyword>
<protein>
    <recommendedName>
        <fullName>Exoribonuclease 2</fullName>
        <ecNumber>3.1.13.1</ecNumber>
    </recommendedName>
    <alternativeName>
        <fullName>Exoribonuclease II</fullName>
        <shortName>RNase II</shortName>
        <shortName>Ribonuclease II</shortName>
    </alternativeName>
</protein>
<dbReference type="EC" id="3.1.13.1"/>
<dbReference type="EMBL" id="AE016826">
    <property type="protein sequence ID" value="AAO26974.1"/>
    <property type="molecule type" value="Genomic_DNA"/>
</dbReference>
<dbReference type="RefSeq" id="WP_011091375.1">
    <property type="nucleotide sequence ID" value="NC_004545.1"/>
</dbReference>
<dbReference type="SMR" id="Q89AM0"/>
<dbReference type="STRING" id="224915.bbp_247"/>
<dbReference type="KEGG" id="bab:bbp_247"/>
<dbReference type="eggNOG" id="COG4776">
    <property type="taxonomic scope" value="Bacteria"/>
</dbReference>
<dbReference type="HOGENOM" id="CLU_002333_7_3_6"/>
<dbReference type="OrthoDB" id="9764149at2"/>
<dbReference type="Proteomes" id="UP000000601">
    <property type="component" value="Chromosome"/>
</dbReference>
<dbReference type="GO" id="GO:0005829">
    <property type="term" value="C:cytosol"/>
    <property type="evidence" value="ECO:0007669"/>
    <property type="project" value="TreeGrafter"/>
</dbReference>
<dbReference type="GO" id="GO:0008859">
    <property type="term" value="F:exoribonuclease II activity"/>
    <property type="evidence" value="ECO:0007669"/>
    <property type="project" value="UniProtKB-UniRule"/>
</dbReference>
<dbReference type="GO" id="GO:0003723">
    <property type="term" value="F:RNA binding"/>
    <property type="evidence" value="ECO:0007669"/>
    <property type="project" value="UniProtKB-KW"/>
</dbReference>
<dbReference type="GO" id="GO:0006402">
    <property type="term" value="P:mRNA catabolic process"/>
    <property type="evidence" value="ECO:0007669"/>
    <property type="project" value="UniProtKB-UniRule"/>
</dbReference>
<dbReference type="Gene3D" id="2.40.50.640">
    <property type="match status" value="1"/>
</dbReference>
<dbReference type="Gene3D" id="2.40.50.140">
    <property type="entry name" value="Nucleic acid-binding proteins"/>
    <property type="match status" value="2"/>
</dbReference>
<dbReference type="HAMAP" id="MF_01036">
    <property type="entry name" value="RNase_II"/>
    <property type="match status" value="1"/>
</dbReference>
<dbReference type="InterPro" id="IPR011129">
    <property type="entry name" value="CSD"/>
</dbReference>
<dbReference type="InterPro" id="IPR012340">
    <property type="entry name" value="NA-bd_OB-fold"/>
</dbReference>
<dbReference type="InterPro" id="IPR013223">
    <property type="entry name" value="RNase_B_OB_dom"/>
</dbReference>
<dbReference type="InterPro" id="IPR011804">
    <property type="entry name" value="RNase_II"/>
</dbReference>
<dbReference type="InterPro" id="IPR001900">
    <property type="entry name" value="RNase_II/R"/>
</dbReference>
<dbReference type="InterPro" id="IPR022966">
    <property type="entry name" value="RNase_II/R_CS"/>
</dbReference>
<dbReference type="InterPro" id="IPR004476">
    <property type="entry name" value="RNase_II/RNase_R"/>
</dbReference>
<dbReference type="InterPro" id="IPR050180">
    <property type="entry name" value="RNR_Ribonuclease"/>
</dbReference>
<dbReference type="NCBIfam" id="TIGR00358">
    <property type="entry name" value="3_prime_RNase"/>
    <property type="match status" value="1"/>
</dbReference>
<dbReference type="NCBIfam" id="NF003455">
    <property type="entry name" value="PRK05054.1"/>
    <property type="match status" value="1"/>
</dbReference>
<dbReference type="NCBIfam" id="TIGR02062">
    <property type="entry name" value="RNase_B"/>
    <property type="match status" value="1"/>
</dbReference>
<dbReference type="PANTHER" id="PTHR23355:SF37">
    <property type="entry name" value="EXORIBONUCLEASE 2"/>
    <property type="match status" value="1"/>
</dbReference>
<dbReference type="PANTHER" id="PTHR23355">
    <property type="entry name" value="RIBONUCLEASE"/>
    <property type="match status" value="1"/>
</dbReference>
<dbReference type="Pfam" id="PF08206">
    <property type="entry name" value="OB_RNB"/>
    <property type="match status" value="1"/>
</dbReference>
<dbReference type="Pfam" id="PF00773">
    <property type="entry name" value="RNB"/>
    <property type="match status" value="1"/>
</dbReference>
<dbReference type="SMART" id="SM00357">
    <property type="entry name" value="CSP"/>
    <property type="match status" value="1"/>
</dbReference>
<dbReference type="SMART" id="SM00955">
    <property type="entry name" value="RNB"/>
    <property type="match status" value="1"/>
</dbReference>
<dbReference type="SUPFAM" id="SSF50249">
    <property type="entry name" value="Nucleic acid-binding proteins"/>
    <property type="match status" value="4"/>
</dbReference>
<dbReference type="PROSITE" id="PS01175">
    <property type="entry name" value="RIBONUCLEASE_II"/>
    <property type="match status" value="1"/>
</dbReference>
<organism>
    <name type="scientific">Buchnera aphidicola subsp. Baizongia pistaciae (strain Bp)</name>
    <dbReference type="NCBI Taxonomy" id="224915"/>
    <lineage>
        <taxon>Bacteria</taxon>
        <taxon>Pseudomonadati</taxon>
        <taxon>Pseudomonadota</taxon>
        <taxon>Gammaproteobacteria</taxon>
        <taxon>Enterobacterales</taxon>
        <taxon>Erwiniaceae</taxon>
        <taxon>Buchnera</taxon>
    </lineage>
</organism>
<proteinExistence type="inferred from homology"/>
<accession>Q89AM0</accession>
<sequence length="646" mass="74771">MLRNHPLLSKLKRKLNSNIPRVEGIVKSTEKGFGFLEIDSKTSYFIPFKNMKKVMHGDRITALLKIDNSREIAEPEKLIEPFLTRFIGTIQVNKSIISIIPDHPFFKEKIVCSVSCILPKCVKTGDWAVAVLMQHKLIQGHYKFLAKLVKYIIKKDDVLVPWLVTLSRYQLESDCFKLNSSSIIFDNSLKREDLTHLDFITIDNSSTKDIDDALYVEKQSLGAFNLIVAISDPTSYIPFGSSLDNFALKRSFTNYLPGFTIPMLPSELSENKCSLKVNKSRPVIACKIRIDSDGCILHNYSYFFLAWIKSKATLVYECVSDWLEHKGKWVPECSNIANQLFMLNSIYNIRRNWRKNYAVLFKEHPEYNFKLSSNFQVLNVFMEMRRTAHKIVEEAMIAANICAAKVLSEKLGFGIYNVHIGFDASNSENVVRLLSKYGFNFCKDEIRTLKGFCKLRRILNKHSYKYLDNRIKKYQSFGELQFFPGPHFALGLDAYATWTSPIRKYSDMVNHRLLKSIITHTHVIKPSCDILLKINDRRKRLKMAERDLEDWLYSKFFSSIEYTKNSFNAEIIDVFRSGIRVRSLKNGANIFIPSSFLHNIRNELLCHQDQGIVYINDKKMYSVSDIIQVKLINIRTQTRNLIGKPV</sequence>
<feature type="chain" id="PRO_0000166379" description="Exoribonuclease 2">
    <location>
        <begin position="1"/>
        <end position="646"/>
    </location>
</feature>
<feature type="domain" description="RNB" evidence="2">
    <location>
        <begin position="191"/>
        <end position="519"/>
    </location>
</feature>
<feature type="domain" description="S1 motif">
    <location>
        <begin position="564"/>
        <end position="646"/>
    </location>
</feature>
<name>RNB_BUCBP</name>